<keyword id="KW-0472">Membrane</keyword>
<keyword id="KW-1185">Reference proteome</keyword>
<keyword id="KW-0812">Transmembrane</keyword>
<keyword id="KW-1133">Transmembrane helix</keyword>
<feature type="chain" id="PRO_0000222094" description="Putative membrane protein ORF8">
    <location>
        <begin position="1"/>
        <end position="232"/>
    </location>
</feature>
<feature type="transmembrane region" description="Helical" evidence="1">
    <location>
        <begin position="166"/>
        <end position="182"/>
    </location>
</feature>
<feature type="transmembrane region" description="Helical" evidence="1">
    <location>
        <begin position="195"/>
        <end position="211"/>
    </location>
</feature>
<feature type="region of interest" description="Disordered" evidence="2">
    <location>
        <begin position="71"/>
        <end position="121"/>
    </location>
</feature>
<feature type="compositionally biased region" description="Low complexity" evidence="2">
    <location>
        <begin position="71"/>
        <end position="84"/>
    </location>
</feature>
<evidence type="ECO:0000255" key="1"/>
<evidence type="ECO:0000256" key="2">
    <source>
        <dbReference type="SAM" id="MobiDB-lite"/>
    </source>
</evidence>
<evidence type="ECO:0000305" key="3"/>
<organism>
    <name type="scientific">Ictalurid herpesvirus 1 (strain Auburn)</name>
    <name type="common">IcHV-1</name>
    <name type="synonym">Channel catfish herpesvirus</name>
    <dbReference type="NCBI Taxonomy" id="766178"/>
    <lineage>
        <taxon>Viruses</taxon>
        <taxon>Duplodnaviria</taxon>
        <taxon>Heunggongvirae</taxon>
        <taxon>Peploviricota</taxon>
        <taxon>Herviviricetes</taxon>
        <taxon>Herpesvirales</taxon>
        <taxon>Alloherpesviridae</taxon>
        <taxon>Ictavirus</taxon>
        <taxon>Ictavirus ictaluridallo1</taxon>
        <taxon>Ictalurid herpesvirus 1</taxon>
    </lineage>
</organism>
<dbReference type="EMBL" id="M75136">
    <property type="protein sequence ID" value="AAA88189.1"/>
    <property type="molecule type" value="Genomic_DNA"/>
</dbReference>
<dbReference type="EMBL" id="M75136">
    <property type="protein sequence ID" value="AAA88111.1"/>
    <property type="molecule type" value="Genomic_DNA"/>
</dbReference>
<dbReference type="PIR" id="I36786">
    <property type="entry name" value="MMBEI3"/>
</dbReference>
<dbReference type="SMR" id="Q00137"/>
<dbReference type="KEGG" id="vg:1488376"/>
<dbReference type="KEGG" id="vg:1488394"/>
<dbReference type="Proteomes" id="UP000007643">
    <property type="component" value="Segment"/>
</dbReference>
<dbReference type="GO" id="GO:0016020">
    <property type="term" value="C:membrane"/>
    <property type="evidence" value="ECO:0007669"/>
    <property type="project" value="UniProtKB-SubCell"/>
</dbReference>
<protein>
    <recommendedName>
        <fullName>Putative membrane protein ORF8</fullName>
    </recommendedName>
</protein>
<sequence length="232" mass="25466">MKCPRARVDIFKREIKTRELEPTEKNVYHGLTGPISLPPHNPVSIRFQEMVSWRLRSAVIGFFLLVSSTSGSSAASIPSAPTPDATRESPTGEPHRDRALSTETPTPEPSRDGGSTPEVLHVVTGPVRPRDRDPILERLAEILAETHSLHQLLTPGTGPREDEDEVFARALAAAEIAIGSVADRVMWKATLSCMLVVTSLVFAGVALWVIVARHGHFRVIPHERSRDWSPGL</sequence>
<gene>
    <name type="primary">ORF8</name>
</gene>
<comment type="subcellular location">
    <subcellularLocation>
        <location evidence="3">Membrane</location>
        <topology evidence="3">Multi-pass membrane protein</topology>
    </subcellularLocation>
</comment>
<accession>Q00137</accession>
<organismHost>
    <name type="scientific">Ictaluridae</name>
    <name type="common">bullhead catfishes</name>
    <dbReference type="NCBI Taxonomy" id="7996"/>
</organismHost>
<reference key="1">
    <citation type="journal article" date="1992" name="Virology">
        <title>Channel catfish virus: a new type of herpesvirus.</title>
        <authorList>
            <person name="Davison A.J."/>
        </authorList>
    </citation>
    <scope>NUCLEOTIDE SEQUENCE [LARGE SCALE GENOMIC DNA]</scope>
</reference>
<proteinExistence type="predicted"/>
<name>VG08_ICHVA</name>